<organism>
    <name type="scientific">Nitrosospira multiformis (strain ATCC 25196 / NCIMB 11849 / C 71)</name>
    <dbReference type="NCBI Taxonomy" id="323848"/>
    <lineage>
        <taxon>Bacteria</taxon>
        <taxon>Pseudomonadati</taxon>
        <taxon>Pseudomonadota</taxon>
        <taxon>Betaproteobacteria</taxon>
        <taxon>Nitrosomonadales</taxon>
        <taxon>Nitrosomonadaceae</taxon>
        <taxon>Nitrosospira</taxon>
    </lineage>
</organism>
<accession>Q2YAV4</accession>
<protein>
    <recommendedName>
        <fullName evidence="1">Sec-independent protein translocase protein TatA</fullName>
    </recommendedName>
</protein>
<feature type="chain" id="PRO_1000044412" description="Sec-independent protein translocase protein TatA">
    <location>
        <begin position="1"/>
        <end position="74"/>
    </location>
</feature>
<feature type="transmembrane region" description="Helical" evidence="1">
    <location>
        <begin position="1"/>
        <end position="21"/>
    </location>
</feature>
<sequence length="74" mass="8134">MGSFSIWHWLIVLLIVVLVFGTKKLRNLGSDLGGAVKGFREGVKSADEEEISAHNHTEARIIDADIKDKAQSKS</sequence>
<proteinExistence type="inferred from homology"/>
<evidence type="ECO:0000255" key="1">
    <source>
        <dbReference type="HAMAP-Rule" id="MF_00236"/>
    </source>
</evidence>
<name>TATA_NITMU</name>
<gene>
    <name evidence="1" type="primary">tatA</name>
    <name type="ordered locus">Nmul_A0810</name>
</gene>
<reference key="1">
    <citation type="submission" date="2005-08" db="EMBL/GenBank/DDBJ databases">
        <title>Complete sequence of chromosome 1 of Nitrosospira multiformis ATCC 25196.</title>
        <authorList>
            <person name="Copeland A."/>
            <person name="Lucas S."/>
            <person name="Lapidus A."/>
            <person name="Barry K."/>
            <person name="Detter J.C."/>
            <person name="Glavina T."/>
            <person name="Hammon N."/>
            <person name="Israni S."/>
            <person name="Pitluck S."/>
            <person name="Chain P."/>
            <person name="Malfatti S."/>
            <person name="Shin M."/>
            <person name="Vergez L."/>
            <person name="Schmutz J."/>
            <person name="Larimer F."/>
            <person name="Land M."/>
            <person name="Hauser L."/>
            <person name="Kyrpides N."/>
            <person name="Lykidis A."/>
            <person name="Richardson P."/>
        </authorList>
    </citation>
    <scope>NUCLEOTIDE SEQUENCE [LARGE SCALE GENOMIC DNA]</scope>
    <source>
        <strain>ATCC 25196 / NCIMB 11849 / C 71</strain>
    </source>
</reference>
<keyword id="KW-0997">Cell inner membrane</keyword>
<keyword id="KW-1003">Cell membrane</keyword>
<keyword id="KW-0472">Membrane</keyword>
<keyword id="KW-0653">Protein transport</keyword>
<keyword id="KW-1185">Reference proteome</keyword>
<keyword id="KW-0811">Translocation</keyword>
<keyword id="KW-0812">Transmembrane</keyword>
<keyword id="KW-1133">Transmembrane helix</keyword>
<keyword id="KW-0813">Transport</keyword>
<comment type="function">
    <text evidence="1">Part of the twin-arginine translocation (Tat) system that transports large folded proteins containing a characteristic twin-arginine motif in their signal peptide across membranes. TatA could form the protein-conducting channel of the Tat system.</text>
</comment>
<comment type="subunit">
    <text evidence="1">The Tat system comprises two distinct complexes: a TatABC complex, containing multiple copies of TatA, TatB and TatC subunits, and a separate TatA complex, containing only TatA subunits. Substrates initially bind to the TatABC complex, which probably triggers association of the separate TatA complex to form the active translocon.</text>
</comment>
<comment type="subcellular location">
    <subcellularLocation>
        <location evidence="1">Cell inner membrane</location>
        <topology evidence="1">Single-pass membrane protein</topology>
    </subcellularLocation>
</comment>
<comment type="similarity">
    <text evidence="1">Belongs to the TatA/E family.</text>
</comment>
<dbReference type="EMBL" id="CP000103">
    <property type="protein sequence ID" value="ABB74117.1"/>
    <property type="molecule type" value="Genomic_DNA"/>
</dbReference>
<dbReference type="RefSeq" id="WP_011380165.1">
    <property type="nucleotide sequence ID" value="NC_007614.1"/>
</dbReference>
<dbReference type="SMR" id="Q2YAV4"/>
<dbReference type="STRING" id="323848.Nmul_A0810"/>
<dbReference type="KEGG" id="nmu:Nmul_A0810"/>
<dbReference type="eggNOG" id="COG1826">
    <property type="taxonomic scope" value="Bacteria"/>
</dbReference>
<dbReference type="HOGENOM" id="CLU_086034_5_3_4"/>
<dbReference type="OrthoDB" id="7066617at2"/>
<dbReference type="Proteomes" id="UP000002718">
    <property type="component" value="Chromosome"/>
</dbReference>
<dbReference type="GO" id="GO:0033281">
    <property type="term" value="C:TAT protein transport complex"/>
    <property type="evidence" value="ECO:0007669"/>
    <property type="project" value="UniProtKB-UniRule"/>
</dbReference>
<dbReference type="GO" id="GO:0008320">
    <property type="term" value="F:protein transmembrane transporter activity"/>
    <property type="evidence" value="ECO:0007669"/>
    <property type="project" value="UniProtKB-UniRule"/>
</dbReference>
<dbReference type="GO" id="GO:0043953">
    <property type="term" value="P:protein transport by the Tat complex"/>
    <property type="evidence" value="ECO:0007669"/>
    <property type="project" value="UniProtKB-UniRule"/>
</dbReference>
<dbReference type="Gene3D" id="1.20.5.3310">
    <property type="match status" value="1"/>
</dbReference>
<dbReference type="HAMAP" id="MF_00236">
    <property type="entry name" value="TatA_E"/>
    <property type="match status" value="1"/>
</dbReference>
<dbReference type="InterPro" id="IPR003369">
    <property type="entry name" value="TatA/B/E"/>
</dbReference>
<dbReference type="InterPro" id="IPR006312">
    <property type="entry name" value="TatA/E"/>
</dbReference>
<dbReference type="NCBIfam" id="NF002813">
    <property type="entry name" value="PRK02958.1"/>
    <property type="match status" value="1"/>
</dbReference>
<dbReference type="NCBIfam" id="TIGR01411">
    <property type="entry name" value="tatAE"/>
    <property type="match status" value="1"/>
</dbReference>
<dbReference type="PANTHER" id="PTHR42982">
    <property type="entry name" value="SEC-INDEPENDENT PROTEIN TRANSLOCASE PROTEIN TATA"/>
    <property type="match status" value="1"/>
</dbReference>
<dbReference type="PANTHER" id="PTHR42982:SF1">
    <property type="entry name" value="SEC-INDEPENDENT PROTEIN TRANSLOCASE PROTEIN TATA"/>
    <property type="match status" value="1"/>
</dbReference>
<dbReference type="Pfam" id="PF02416">
    <property type="entry name" value="TatA_B_E"/>
    <property type="match status" value="1"/>
</dbReference>